<reference key="1">
    <citation type="journal article" date="1991" name="Virology">
        <title>Sequence analysis and expression of the human parainfluenza type 1 virus nucleoprotein gene.</title>
        <authorList>
            <person name="Matsuoka Y."/>
            <person name="Ray R."/>
        </authorList>
    </citation>
    <scope>NUCLEOTIDE SEQUENCE [MRNA]</scope>
</reference>
<evidence type="ECO:0000250" key="1">
    <source>
        <dbReference type="UniProtKB" id="O57286"/>
    </source>
</evidence>
<evidence type="ECO:0000250" key="2">
    <source>
        <dbReference type="UniProtKB" id="P06159"/>
    </source>
</evidence>
<evidence type="ECO:0000250" key="3">
    <source>
        <dbReference type="UniProtKB" id="Q07097"/>
    </source>
</evidence>
<evidence type="ECO:0000256" key="4">
    <source>
        <dbReference type="SAM" id="MobiDB-lite"/>
    </source>
</evidence>
<evidence type="ECO:0000305" key="5"/>
<dbReference type="EMBL" id="M62850">
    <property type="protein sequence ID" value="AAA46828.1"/>
    <property type="molecule type" value="mRNA"/>
</dbReference>
<dbReference type="SMR" id="P24304"/>
<dbReference type="GO" id="GO:0019029">
    <property type="term" value="C:helical viral capsid"/>
    <property type="evidence" value="ECO:0007669"/>
    <property type="project" value="UniProtKB-KW"/>
</dbReference>
<dbReference type="GO" id="GO:0030430">
    <property type="term" value="C:host cell cytoplasm"/>
    <property type="evidence" value="ECO:0007669"/>
    <property type="project" value="UniProtKB-SubCell"/>
</dbReference>
<dbReference type="GO" id="GO:1990904">
    <property type="term" value="C:ribonucleoprotein complex"/>
    <property type="evidence" value="ECO:0007669"/>
    <property type="project" value="UniProtKB-KW"/>
</dbReference>
<dbReference type="GO" id="GO:0019013">
    <property type="term" value="C:viral nucleocapsid"/>
    <property type="evidence" value="ECO:0007669"/>
    <property type="project" value="UniProtKB-KW"/>
</dbReference>
<dbReference type="GO" id="GO:0003723">
    <property type="term" value="F:RNA binding"/>
    <property type="evidence" value="ECO:0007669"/>
    <property type="project" value="UniProtKB-KW"/>
</dbReference>
<dbReference type="GO" id="GO:0005198">
    <property type="term" value="F:structural molecule activity"/>
    <property type="evidence" value="ECO:0007669"/>
    <property type="project" value="InterPro"/>
</dbReference>
<dbReference type="InterPro" id="IPR002021">
    <property type="entry name" value="Paramyx_ncap"/>
</dbReference>
<dbReference type="Pfam" id="PF00973">
    <property type="entry name" value="Paramyxo_ncap"/>
    <property type="match status" value="1"/>
</dbReference>
<accession>P24304</accession>
<organismHost>
    <name type="scientific">Homo sapiens</name>
    <name type="common">Human</name>
    <dbReference type="NCBI Taxonomy" id="9606"/>
</organismHost>
<gene>
    <name type="primary">N</name>
    <name type="synonym">NP</name>
</gene>
<feature type="chain" id="PRO_0000142672" description="Nucleoprotein">
    <location>
        <begin position="1"/>
        <end position="524"/>
    </location>
</feature>
<feature type="region of interest" description="Ncore" evidence="2">
    <location>
        <begin position="4"/>
        <end position="404"/>
    </location>
</feature>
<feature type="region of interest" description="Ntail" evidence="2">
    <location>
        <begin position="405"/>
        <end position="524"/>
    </location>
</feature>
<feature type="region of interest" description="Homomultimerization" evidence="3">
    <location>
        <begin position="440"/>
        <end position="461"/>
    </location>
</feature>
<feature type="region of interest" description="Interaction with the phosphoprotein" evidence="3">
    <location>
        <begin position="462"/>
        <end position="471"/>
    </location>
</feature>
<feature type="region of interest" description="Disordered" evidence="4">
    <location>
        <begin position="490"/>
        <end position="524"/>
    </location>
</feature>
<feature type="compositionally biased region" description="Polar residues" evidence="4">
    <location>
        <begin position="494"/>
        <end position="504"/>
    </location>
</feature>
<feature type="binding site" evidence="1">
    <location>
        <position position="180"/>
    </location>
    <ligand>
        <name>RNA</name>
        <dbReference type="ChEBI" id="CHEBI:33697"/>
    </ligand>
</feature>
<feature type="binding site" evidence="1">
    <location>
        <position position="190"/>
    </location>
    <ligand>
        <name>RNA</name>
        <dbReference type="ChEBI" id="CHEBI:33697"/>
    </ligand>
</feature>
<feature type="binding site" evidence="1">
    <location>
        <position position="195"/>
    </location>
    <ligand>
        <name>RNA</name>
        <dbReference type="ChEBI" id="CHEBI:33697"/>
    </ligand>
</feature>
<feature type="binding site" evidence="1">
    <location>
        <position position="260"/>
    </location>
    <ligand>
        <name>RNA</name>
        <dbReference type="ChEBI" id="CHEBI:33697"/>
    </ligand>
</feature>
<feature type="binding site" evidence="1">
    <location>
        <position position="350"/>
    </location>
    <ligand>
        <name>RNA</name>
        <dbReference type="ChEBI" id="CHEBI:33697"/>
    </ligand>
</feature>
<feature type="binding site" evidence="1">
    <location>
        <position position="354"/>
    </location>
    <ligand>
        <name>RNA</name>
        <dbReference type="ChEBI" id="CHEBI:33697"/>
    </ligand>
</feature>
<proteinExistence type="evidence at transcript level"/>
<protein>
    <recommendedName>
        <fullName>Nucleoprotein</fullName>
    </recommendedName>
    <alternativeName>
        <fullName>Nucleocapsid protein</fullName>
        <shortName>NP</shortName>
        <shortName>Protein N</shortName>
    </alternativeName>
</protein>
<name>NCAP_PI1HC</name>
<keyword id="KW-0167">Capsid protein</keyword>
<keyword id="KW-1139">Helical capsid protein</keyword>
<keyword id="KW-1035">Host cytoplasm</keyword>
<keyword id="KW-0687">Ribonucleoprotein</keyword>
<keyword id="KW-0694">RNA-binding</keyword>
<keyword id="KW-0543">Viral nucleoprotein</keyword>
<keyword id="KW-0946">Virion</keyword>
<organism>
    <name type="scientific">Human parainfluenza 1 virus (strain C39)</name>
    <name type="common">HPIV-1</name>
    <dbReference type="NCBI Taxonomy" id="11210"/>
    <lineage>
        <taxon>Viruses</taxon>
        <taxon>Riboviria</taxon>
        <taxon>Orthornavirae</taxon>
        <taxon>Negarnaviricota</taxon>
        <taxon>Haploviricotina</taxon>
        <taxon>Monjiviricetes</taxon>
        <taxon>Mononegavirales</taxon>
        <taxon>Paramyxoviridae</taxon>
        <taxon>Feraresvirinae</taxon>
        <taxon>Respirovirus</taxon>
        <taxon>Respirovirus laryngotracheitidis</taxon>
    </lineage>
</organism>
<sequence length="524" mass="57551">MAGLLSTFDTFSSRRSESINKSGGGAIIPGQRSTVSVFILGPSVTDDADKLLIATTFLAHSLDTDKQHSQRGGFLVSLLAMAYSSPELYLTTNGVNADVKYVIYNIERDPKRTKTDGFIVKTRDMEYERTTEWLFGPMINKNPLFQGQRENADLEALLQTYGYPACLGAIIVQVWIVLVKAITSSSGLRKGFFNRLEAFRQDGTVKSALVFTGDTVEGIGAVMRSQQSLVSLMVETLVTMNTSRSDLTTLEKNIQIVGNYIRESGLASFMNTIKYGVETKMAALTLSNLRPDINKLRSLVDIYLSKGARAPFTCILRDPVHGEFAPGNYPALWSYAMGVAVVQNKAMQQYVTGRTYLDMEMFLLGQAVAKDADSKISSALEEELGVTDTAKERLRHHLTNLSGGDGAYHKPTGGGAIEVAIDHTDITFGAEDTADRDNKNWTNNSNERWMNHSINNHTITISGAEELEEETNDEDITDIENKIARRLADRKQRLSQANNRQDASSDADHENDDDATAAAGIGGI</sequence>
<comment type="function">
    <text evidence="2 3">Forms the helical nucleocapsid (NC) in a ratio of 1 N per 6 ribonucleotides, protecting the genome from nucleases (By similarity). The encapsidated genomic RNA serves as template for transcription and replication; encapsidation by N is coupled to RNA synthesis. Forms the encapsidation complex with the phosphoprotein protein P. Before encapsidation, the newly synthesized free N protein, so-called N0, is chaperoned by P (By similarity).</text>
</comment>
<comment type="subunit">
    <text evidence="1 2 3">Homomultimer; forms the nucleocapsid (By similarity). Binds to the viral genomic RNA (By similarity). N0 interacts with the phosphoprotein (via N-terminus); this interaction allows P to chaperon N0 to avoid N polymerization before encapsidation (By similarity). Interacts as N-RNA template with the phosphoprotein (via C-terminus); this interaction positions the polymerase on the template (By similarity).</text>
</comment>
<comment type="subcellular location">
    <subcellularLocation>
        <location evidence="5">Virion</location>
    </subcellularLocation>
    <subcellularLocation>
        <location>Host cytoplasm</location>
    </subcellularLocation>
</comment>
<comment type="domain">
    <text evidence="2">Ncore is globular and carries regions required for self-assembly and RNA-binding. Ntail is an intrinsically disordered monomeric domain in the C-terminus.</text>
</comment>
<comment type="similarity">
    <text evidence="5">Belongs to the paramyxoviruses nucleocapsid family.</text>
</comment>